<sequence>MNPEYDYLFKLLLIGDSGVGKSCLLLRFADDSYLDSYISTIGVDFKIRTVEQDGKTIKLQIWDTAGQERFRTITSSYYRGAHGIIVTYDVTDLESFNNVKQWLNEIDRYASENVNKLLVGNKNDLTSQKVVSTETAKAFADELGIPFLETSAKNATNVEEAFMAMTAAIKTRMASQPAGGAKPPTVQIRGQPVNQQSGCCSS</sequence>
<organism>
    <name type="scientific">Arabidopsis thaliana</name>
    <name type="common">Mouse-ear cress</name>
    <dbReference type="NCBI Taxonomy" id="3702"/>
    <lineage>
        <taxon>Eukaryota</taxon>
        <taxon>Viridiplantae</taxon>
        <taxon>Streptophyta</taxon>
        <taxon>Embryophyta</taxon>
        <taxon>Tracheophyta</taxon>
        <taxon>Spermatophyta</taxon>
        <taxon>Magnoliopsida</taxon>
        <taxon>eudicotyledons</taxon>
        <taxon>Gunneridae</taxon>
        <taxon>Pentapetalae</taxon>
        <taxon>rosids</taxon>
        <taxon>malvids</taxon>
        <taxon>Brassicales</taxon>
        <taxon>Brassicaceae</taxon>
        <taxon>Camelineae</taxon>
        <taxon>Arabidopsis</taxon>
    </lineage>
</organism>
<reference key="1">
    <citation type="journal article" date="2000" name="DNA Res.">
        <title>Structural analysis of Arabidopsis thaliana chromosome 5. X. Sequence features of the regions of 3,076,755 bp covered by sixty P1 and TAC clones.</title>
        <authorList>
            <person name="Sato S."/>
            <person name="Nakamura Y."/>
            <person name="Kaneko T."/>
            <person name="Katoh T."/>
            <person name="Asamizu E."/>
            <person name="Kotani H."/>
            <person name="Tabata S."/>
        </authorList>
    </citation>
    <scope>NUCLEOTIDE SEQUENCE [LARGE SCALE GENOMIC DNA]</scope>
    <source>
        <strain>cv. Columbia</strain>
    </source>
</reference>
<reference key="2">
    <citation type="journal article" date="2017" name="Plant J.">
        <title>Araport11: a complete reannotation of the Arabidopsis thaliana reference genome.</title>
        <authorList>
            <person name="Cheng C.Y."/>
            <person name="Krishnakumar V."/>
            <person name="Chan A.P."/>
            <person name="Thibaud-Nissen F."/>
            <person name="Schobel S."/>
            <person name="Town C.D."/>
        </authorList>
    </citation>
    <scope>GENOME REANNOTATION</scope>
    <source>
        <strain>cv. Columbia</strain>
    </source>
</reference>
<reference key="3">
    <citation type="journal article" date="2003" name="Science">
        <title>Empirical analysis of transcriptional activity in the Arabidopsis genome.</title>
        <authorList>
            <person name="Yamada K."/>
            <person name="Lim J."/>
            <person name="Dale J.M."/>
            <person name="Chen H."/>
            <person name="Shinn P."/>
            <person name="Palm C.J."/>
            <person name="Southwick A.M."/>
            <person name="Wu H.C."/>
            <person name="Kim C.J."/>
            <person name="Nguyen M."/>
            <person name="Pham P.K."/>
            <person name="Cheuk R.F."/>
            <person name="Karlin-Newmann G."/>
            <person name="Liu S.X."/>
            <person name="Lam B."/>
            <person name="Sakano H."/>
            <person name="Wu T."/>
            <person name="Yu G."/>
            <person name="Miranda M."/>
            <person name="Quach H.L."/>
            <person name="Tripp M."/>
            <person name="Chang C.H."/>
            <person name="Lee J.M."/>
            <person name="Toriumi M.J."/>
            <person name="Chan M.M."/>
            <person name="Tang C.C."/>
            <person name="Onodera C.S."/>
            <person name="Deng J.M."/>
            <person name="Akiyama K."/>
            <person name="Ansari Y."/>
            <person name="Arakawa T."/>
            <person name="Banh J."/>
            <person name="Banno F."/>
            <person name="Bowser L."/>
            <person name="Brooks S.Y."/>
            <person name="Carninci P."/>
            <person name="Chao Q."/>
            <person name="Choy N."/>
            <person name="Enju A."/>
            <person name="Goldsmith A.D."/>
            <person name="Gurjal M."/>
            <person name="Hansen N.F."/>
            <person name="Hayashizaki Y."/>
            <person name="Johnson-Hopson C."/>
            <person name="Hsuan V.W."/>
            <person name="Iida K."/>
            <person name="Karnes M."/>
            <person name="Khan S."/>
            <person name="Koesema E."/>
            <person name="Ishida J."/>
            <person name="Jiang P.X."/>
            <person name="Jones T."/>
            <person name="Kawai J."/>
            <person name="Kamiya A."/>
            <person name="Meyers C."/>
            <person name="Nakajima M."/>
            <person name="Narusaka M."/>
            <person name="Seki M."/>
            <person name="Sakurai T."/>
            <person name="Satou M."/>
            <person name="Tamse R."/>
            <person name="Vaysberg M."/>
            <person name="Wallender E.K."/>
            <person name="Wong C."/>
            <person name="Yamamura Y."/>
            <person name="Yuan S."/>
            <person name="Shinozaki K."/>
            <person name="Davis R.W."/>
            <person name="Theologis A."/>
            <person name="Ecker J.R."/>
        </authorList>
    </citation>
    <scope>NUCLEOTIDE SEQUENCE [LARGE SCALE MRNA]</scope>
    <source>
        <strain>cv. Columbia</strain>
    </source>
</reference>
<reference key="4">
    <citation type="submission" date="2005-07" db="EMBL/GenBank/DDBJ databases">
        <title>Arabidopsis ORF clones.</title>
        <authorList>
            <person name="Cheuk R."/>
            <person name="Chen H."/>
            <person name="Kim C.J."/>
            <person name="Shinn P."/>
            <person name="Ecker J.R."/>
        </authorList>
    </citation>
    <scope>NUCLEOTIDE SEQUENCE [LARGE SCALE MRNA]</scope>
</reference>
<reference key="5">
    <citation type="submission" date="2006-06" db="EMBL/GenBank/DDBJ databases">
        <title>Arabidopsis ORF clones.</title>
        <authorList>
            <person name="Kim C.J."/>
            <person name="Chen H."/>
            <person name="Quinitio C."/>
            <person name="Shinn P."/>
            <person name="Ecker J.R."/>
        </authorList>
    </citation>
    <scope>NUCLEOTIDE SEQUENCE [LARGE SCALE MRNA]</scope>
</reference>
<reference key="6">
    <citation type="submission" date="2006-07" db="EMBL/GenBank/DDBJ databases">
        <title>Large-scale analysis of RIKEN Arabidopsis full-length (RAFL) cDNAs.</title>
        <authorList>
            <person name="Totoki Y."/>
            <person name="Seki M."/>
            <person name="Ishida J."/>
            <person name="Nakajima M."/>
            <person name="Enju A."/>
            <person name="Kamiya A."/>
            <person name="Narusaka M."/>
            <person name="Shin-i T."/>
            <person name="Nakagawa M."/>
            <person name="Sakamoto N."/>
            <person name="Oishi K."/>
            <person name="Kohara Y."/>
            <person name="Kobayashi M."/>
            <person name="Toyoda A."/>
            <person name="Sakaki Y."/>
            <person name="Sakurai T."/>
            <person name="Iida K."/>
            <person name="Akiyama K."/>
            <person name="Satou M."/>
            <person name="Toyoda T."/>
            <person name="Konagaya A."/>
            <person name="Carninci P."/>
            <person name="Kawai J."/>
            <person name="Hayashizaki Y."/>
            <person name="Shinozaki K."/>
        </authorList>
    </citation>
    <scope>NUCLEOTIDE SEQUENCE [LARGE SCALE MRNA]</scope>
    <source>
        <strain>cv. Columbia</strain>
    </source>
</reference>
<reference key="7">
    <citation type="submission" date="2002-03" db="EMBL/GenBank/DDBJ databases">
        <title>Full-length cDNA from Arabidopsis thaliana.</title>
        <authorList>
            <person name="Brover V.V."/>
            <person name="Troukhan M.E."/>
            <person name="Alexandrov N.A."/>
            <person name="Lu Y.-P."/>
            <person name="Flavell R.B."/>
            <person name="Feldmann K.A."/>
        </authorList>
    </citation>
    <scope>NUCLEOTIDE SEQUENCE [LARGE SCALE MRNA]</scope>
</reference>
<reference key="8">
    <citation type="journal article" date="2003" name="Plant Physiol.">
        <title>Analysis of the small GTPase gene superfamily of Arabidopsis.</title>
        <authorList>
            <person name="Vernoud V."/>
            <person name="Horton A.C."/>
            <person name="Yang Z."/>
            <person name="Nielsen E."/>
        </authorList>
    </citation>
    <scope>GENE FAMILY</scope>
    <scope>NOMENCLATURE</scope>
</reference>
<feature type="chain" id="PRO_0000407330" description="Ras-related protein RABD2b">
    <location>
        <begin position="1"/>
        <end position="202"/>
    </location>
</feature>
<feature type="region of interest" description="Disordered" evidence="3">
    <location>
        <begin position="174"/>
        <end position="202"/>
    </location>
</feature>
<feature type="short sequence motif" description="Effector region" evidence="1">
    <location>
        <begin position="37"/>
        <end position="45"/>
    </location>
</feature>
<feature type="compositionally biased region" description="Polar residues" evidence="3">
    <location>
        <begin position="192"/>
        <end position="202"/>
    </location>
</feature>
<feature type="binding site" evidence="2">
    <location>
        <begin position="15"/>
        <end position="23"/>
    </location>
    <ligand>
        <name>GTP</name>
        <dbReference type="ChEBI" id="CHEBI:37565"/>
    </ligand>
</feature>
<feature type="binding site" evidence="2">
    <location>
        <begin position="33"/>
        <end position="40"/>
    </location>
    <ligand>
        <name>GTP</name>
        <dbReference type="ChEBI" id="CHEBI:37565"/>
    </ligand>
</feature>
<feature type="binding site" evidence="2">
    <location>
        <begin position="63"/>
        <end position="67"/>
    </location>
    <ligand>
        <name>GTP</name>
        <dbReference type="ChEBI" id="CHEBI:37565"/>
    </ligand>
</feature>
<feature type="binding site" evidence="2">
    <location>
        <begin position="121"/>
        <end position="124"/>
    </location>
    <ligand>
        <name>GTP</name>
        <dbReference type="ChEBI" id="CHEBI:37565"/>
    </ligand>
</feature>
<feature type="binding site" evidence="2">
    <location>
        <begin position="151"/>
        <end position="153"/>
    </location>
    <ligand>
        <name>GTP</name>
        <dbReference type="ChEBI" id="CHEBI:37565"/>
    </ligand>
</feature>
<feature type="lipid moiety-binding region" description="S-geranylgeranyl cysteine" evidence="1">
    <location>
        <position position="199"/>
    </location>
</feature>
<feature type="lipid moiety-binding region" description="S-geranylgeranyl cysteine" evidence="1">
    <location>
        <position position="200"/>
    </location>
</feature>
<accession>Q9FPJ4</accession>
<accession>Q9LVT9</accession>
<gene>
    <name type="primary">RABD2B</name>
    <name type="synonym">RAB1A</name>
    <name type="ordered locus">At5g47200</name>
    <name type="ORF">MQL5.5</name>
</gene>
<dbReference type="EMBL" id="AB018117">
    <property type="protein sequence ID" value="BAA97153.1"/>
    <property type="status" value="ALT_SEQ"/>
    <property type="molecule type" value="Genomic_DNA"/>
</dbReference>
<dbReference type="EMBL" id="CP002688">
    <property type="protein sequence ID" value="AED95483.1"/>
    <property type="molecule type" value="Genomic_DNA"/>
</dbReference>
<dbReference type="EMBL" id="AF324990">
    <property type="protein sequence ID" value="AAG40342.1"/>
    <property type="molecule type" value="mRNA"/>
</dbReference>
<dbReference type="EMBL" id="AY080753">
    <property type="protein sequence ID" value="AAL85999.1"/>
    <property type="molecule type" value="mRNA"/>
</dbReference>
<dbReference type="EMBL" id="AY114013">
    <property type="protein sequence ID" value="AAM45061.1"/>
    <property type="molecule type" value="mRNA"/>
</dbReference>
<dbReference type="EMBL" id="BT023739">
    <property type="protein sequence ID" value="AAZ23931.1"/>
    <property type="molecule type" value="mRNA"/>
</dbReference>
<dbReference type="EMBL" id="BT025777">
    <property type="protein sequence ID" value="ABF83667.1"/>
    <property type="molecule type" value="mRNA"/>
</dbReference>
<dbReference type="EMBL" id="AK227103">
    <property type="protein sequence ID" value="BAE99155.1"/>
    <property type="molecule type" value="mRNA"/>
</dbReference>
<dbReference type="EMBL" id="AY085384">
    <property type="protein sequence ID" value="AAM62613.1"/>
    <property type="molecule type" value="mRNA"/>
</dbReference>
<dbReference type="RefSeq" id="NP_568678.1">
    <property type="nucleotide sequence ID" value="NM_124091.5"/>
</dbReference>
<dbReference type="SMR" id="Q9FPJ4"/>
<dbReference type="BioGRID" id="20014">
    <property type="interactions" value="6"/>
</dbReference>
<dbReference type="FunCoup" id="Q9FPJ4">
    <property type="interactions" value="4294"/>
</dbReference>
<dbReference type="IntAct" id="Q9FPJ4">
    <property type="interactions" value="6"/>
</dbReference>
<dbReference type="STRING" id="3702.Q9FPJ4"/>
<dbReference type="iPTMnet" id="Q9FPJ4"/>
<dbReference type="PaxDb" id="3702-AT5G47200.1"/>
<dbReference type="ProteomicsDB" id="236701"/>
<dbReference type="EnsemblPlants" id="AT5G47200.1">
    <property type="protein sequence ID" value="AT5G47200.1"/>
    <property type="gene ID" value="AT5G47200"/>
</dbReference>
<dbReference type="GeneID" id="834766"/>
<dbReference type="Gramene" id="AT5G47200.1">
    <property type="protein sequence ID" value="AT5G47200.1"/>
    <property type="gene ID" value="AT5G47200"/>
</dbReference>
<dbReference type="KEGG" id="ath:AT5G47200"/>
<dbReference type="Araport" id="AT5G47200"/>
<dbReference type="TAIR" id="AT5G47200">
    <property type="gene designation" value="RAB1A"/>
</dbReference>
<dbReference type="eggNOG" id="KOG0084">
    <property type="taxonomic scope" value="Eukaryota"/>
</dbReference>
<dbReference type="HOGENOM" id="CLU_041217_23_1_1"/>
<dbReference type="InParanoid" id="Q9FPJ4"/>
<dbReference type="OMA" id="KNHASYT"/>
<dbReference type="OrthoDB" id="1037288at2759"/>
<dbReference type="PhylomeDB" id="Q9FPJ4"/>
<dbReference type="PRO" id="PR:Q9FPJ4"/>
<dbReference type="Proteomes" id="UP000006548">
    <property type="component" value="Chromosome 5"/>
</dbReference>
<dbReference type="ExpressionAtlas" id="Q9FPJ4">
    <property type="expression patterns" value="baseline and differential"/>
</dbReference>
<dbReference type="GO" id="GO:0005794">
    <property type="term" value="C:Golgi apparatus"/>
    <property type="evidence" value="ECO:0000314"/>
    <property type="project" value="TAIR"/>
</dbReference>
<dbReference type="GO" id="GO:0000139">
    <property type="term" value="C:Golgi membrane"/>
    <property type="evidence" value="ECO:0007669"/>
    <property type="project" value="UniProtKB-SubCell"/>
</dbReference>
<dbReference type="GO" id="GO:0005886">
    <property type="term" value="C:plasma membrane"/>
    <property type="evidence" value="ECO:0007005"/>
    <property type="project" value="TAIR"/>
</dbReference>
<dbReference type="GO" id="GO:0009536">
    <property type="term" value="C:plastid"/>
    <property type="evidence" value="ECO:0007005"/>
    <property type="project" value="TAIR"/>
</dbReference>
<dbReference type="GO" id="GO:0005525">
    <property type="term" value="F:GTP binding"/>
    <property type="evidence" value="ECO:0007669"/>
    <property type="project" value="UniProtKB-KW"/>
</dbReference>
<dbReference type="GO" id="GO:0003924">
    <property type="term" value="F:GTPase activity"/>
    <property type="evidence" value="ECO:0007669"/>
    <property type="project" value="InterPro"/>
</dbReference>
<dbReference type="GO" id="GO:0009860">
    <property type="term" value="P:pollen tube growth"/>
    <property type="evidence" value="ECO:0000316"/>
    <property type="project" value="TAIR"/>
</dbReference>
<dbReference type="GO" id="GO:0015031">
    <property type="term" value="P:protein transport"/>
    <property type="evidence" value="ECO:0007669"/>
    <property type="project" value="UniProtKB-KW"/>
</dbReference>
<dbReference type="GO" id="GO:0016192">
    <property type="term" value="P:vesicle-mediated transport"/>
    <property type="evidence" value="ECO:0007669"/>
    <property type="project" value="UniProtKB-KW"/>
</dbReference>
<dbReference type="CDD" id="cd01869">
    <property type="entry name" value="Rab1_Ypt1"/>
    <property type="match status" value="1"/>
</dbReference>
<dbReference type="FunFam" id="3.40.50.300:FF:000359">
    <property type="entry name" value="Small GTP-binding protein"/>
    <property type="match status" value="1"/>
</dbReference>
<dbReference type="Gene3D" id="3.40.50.300">
    <property type="entry name" value="P-loop containing nucleotide triphosphate hydrolases"/>
    <property type="match status" value="1"/>
</dbReference>
<dbReference type="InterPro" id="IPR027417">
    <property type="entry name" value="P-loop_NTPase"/>
</dbReference>
<dbReference type="InterPro" id="IPR050227">
    <property type="entry name" value="Rab"/>
</dbReference>
<dbReference type="InterPro" id="IPR005225">
    <property type="entry name" value="Small_GTP-bd"/>
</dbReference>
<dbReference type="InterPro" id="IPR001806">
    <property type="entry name" value="Small_GTPase"/>
</dbReference>
<dbReference type="NCBIfam" id="TIGR00231">
    <property type="entry name" value="small_GTP"/>
    <property type="match status" value="1"/>
</dbReference>
<dbReference type="PANTHER" id="PTHR47977">
    <property type="entry name" value="RAS-RELATED PROTEIN RAB"/>
    <property type="match status" value="1"/>
</dbReference>
<dbReference type="Pfam" id="PF00071">
    <property type="entry name" value="Ras"/>
    <property type="match status" value="1"/>
</dbReference>
<dbReference type="PRINTS" id="PR00449">
    <property type="entry name" value="RASTRNSFRMNG"/>
</dbReference>
<dbReference type="SMART" id="SM00175">
    <property type="entry name" value="RAB"/>
    <property type="match status" value="1"/>
</dbReference>
<dbReference type="SMART" id="SM00176">
    <property type="entry name" value="RAN"/>
    <property type="match status" value="1"/>
</dbReference>
<dbReference type="SMART" id="SM00173">
    <property type="entry name" value="RAS"/>
    <property type="match status" value="1"/>
</dbReference>
<dbReference type="SMART" id="SM00174">
    <property type="entry name" value="RHO"/>
    <property type="match status" value="1"/>
</dbReference>
<dbReference type="SUPFAM" id="SSF52540">
    <property type="entry name" value="P-loop containing nucleoside triphosphate hydrolases"/>
    <property type="match status" value="1"/>
</dbReference>
<dbReference type="PROSITE" id="PS51419">
    <property type="entry name" value="RAB"/>
    <property type="match status" value="1"/>
</dbReference>
<evidence type="ECO:0000250" key="1"/>
<evidence type="ECO:0000250" key="2">
    <source>
        <dbReference type="UniProtKB" id="P62820"/>
    </source>
</evidence>
<evidence type="ECO:0000256" key="3">
    <source>
        <dbReference type="SAM" id="MobiDB-lite"/>
    </source>
</evidence>
<evidence type="ECO:0000305" key="4"/>
<protein>
    <recommendedName>
        <fullName>Ras-related protein RABD2b</fullName>
        <shortName>AtRABD2b</shortName>
    </recommendedName>
    <alternativeName>
        <fullName>Ras-related protein Rab1A</fullName>
        <shortName>AtRab1A</shortName>
    </alternativeName>
</protein>
<name>RAD2B_ARATH</name>
<keyword id="KW-0931">ER-Golgi transport</keyword>
<keyword id="KW-0333">Golgi apparatus</keyword>
<keyword id="KW-0342">GTP-binding</keyword>
<keyword id="KW-0449">Lipoprotein</keyword>
<keyword id="KW-0472">Membrane</keyword>
<keyword id="KW-0547">Nucleotide-binding</keyword>
<keyword id="KW-0636">Prenylation</keyword>
<keyword id="KW-0653">Protein transport</keyword>
<keyword id="KW-1185">Reference proteome</keyword>
<keyword id="KW-0813">Transport</keyword>
<comment type="function">
    <text evidence="1">Protein transport. Regulator of membrane traffic from the Golgi apparatus towards the endoplasmic reticulum (ER) (By similarity).</text>
</comment>
<comment type="interaction">
    <interactant intactId="EBI-4462075">
        <id>Q9FPJ4</id>
    </interactant>
    <interactant intactId="EBI-4425250">
        <id>Q8LA96</id>
        <label>BPL1</label>
    </interactant>
    <organismsDiffer>false</organismsDiffer>
    <experiments>3</experiments>
</comment>
<comment type="subcellular location">
    <subcellularLocation>
        <location>Golgi apparatus</location>
        <location>trans-Golgi network membrane</location>
    </subcellularLocation>
    <subcellularLocation>
        <location evidence="4">Golgi apparatus membrane</location>
        <topology evidence="4">Lipid-anchor</topology>
    </subcellularLocation>
</comment>
<comment type="similarity">
    <text evidence="4">Belongs to the small GTPase superfamily. Rab family.</text>
</comment>
<comment type="sequence caution" evidence="4">
    <conflict type="erroneous gene model prediction">
        <sequence resource="EMBL-CDS" id="BAA97153"/>
    </conflict>
</comment>
<proteinExistence type="evidence at protein level"/>